<feature type="chain" id="PRO_0000318494" description="Probable 6-phosphofructo-2-kinase PB17E12.14c">
    <location>
        <begin position="1"/>
        <end position="668"/>
    </location>
</feature>
<feature type="region of interest" description="Disordered" evidence="3">
    <location>
        <begin position="1"/>
        <end position="105"/>
    </location>
</feature>
<feature type="region of interest" description="Disordered" evidence="3">
    <location>
        <begin position="136"/>
        <end position="185"/>
    </location>
</feature>
<feature type="compositionally biased region" description="Basic and acidic residues" evidence="3">
    <location>
        <begin position="1"/>
        <end position="14"/>
    </location>
</feature>
<feature type="compositionally biased region" description="Polar residues" evidence="3">
    <location>
        <begin position="46"/>
        <end position="56"/>
    </location>
</feature>
<feature type="compositionally biased region" description="Polar residues" evidence="3">
    <location>
        <begin position="65"/>
        <end position="86"/>
    </location>
</feature>
<feature type="compositionally biased region" description="Polar residues" evidence="3">
    <location>
        <begin position="164"/>
        <end position="184"/>
    </location>
</feature>
<feature type="active site" evidence="2">
    <location>
        <position position="281"/>
    </location>
</feature>
<feature type="active site" evidence="2">
    <location>
        <position position="312"/>
    </location>
</feature>
<feature type="active site" evidence="2">
    <location>
        <position position="540"/>
    </location>
</feature>
<feature type="active site" description="Proton donor" evidence="1">
    <location>
        <position position="608"/>
    </location>
</feature>
<feature type="binding site" evidence="2">
    <location>
        <begin position="197"/>
        <end position="204"/>
    </location>
    <ligand>
        <name>ATP</name>
        <dbReference type="ChEBI" id="CHEBI:30616"/>
    </ligand>
</feature>
<feature type="binding site" evidence="1">
    <location>
        <position position="346"/>
    </location>
    <ligand>
        <name>beta-D-fructose 6-phosphate</name>
        <dbReference type="ChEBI" id="CHEBI:57634"/>
    </ligand>
</feature>
<sequence>MSNNNNKDDSELQSRTHYYNPDRTAIPVKDDVDQLDKFGSPKLSANDHSFTNTDSVTSEDRPFSSPVSTLTSNSANFSDSSLQNSPVHPIPSPALSPTLNLGSRPDVKRVSSGGYFALPKQLTSIRQTHRPMSQQHRVPSFHPASDTAPPSPIPFHHHLRKKGSSMSIPGQTSIVSSNNGSEATNPPEEKLAIIMVGLPARGKSYIVNKLVRYYNWLQYNCKAFNVGNFRRKHASHSHDDASFFDPSNEEASKLRESFAMDTLDALLQWFEEEDGVVGIFDATNSTSKRRKAIVDHLSKVPYVTTLFIESICNDEQLIAANMRMKLVGPDYKDLNPEQSLRDFQERVRMYERKYEPLGKSEEDLNLRYIKVINVGKKVVAFNIRGFLAGQAVFFLLNFNLSPRQIWVTRHGESVDNVRGRIGGNAELTPLGRQFSEDLALFIDEKRDEFQERLYNDYSKESHLLQHGSHSFNGKQFETSFNCLTPSENTVNDPQVLDPEDEERLEKPYSVWTSMMQRSIQTAAYFDEEQYDIKAMRMLNEICSGICDGLTYEEIKSIYPKEYEARKLDKLNYRYPGSGGESYLDVIYRLQSVIVEIERMKHHVLVIGHRVITRIIIAYFLGCRREDIAYLNVPLHTVYCIEPQPYGTDFYQYNYDPNTRKFSRVPFSL</sequence>
<dbReference type="EC" id="2.7.1.105"/>
<dbReference type="EMBL" id="CU329670">
    <property type="protein sequence ID" value="CAD27507.2"/>
    <property type="molecule type" value="Genomic_DNA"/>
</dbReference>
<dbReference type="RefSeq" id="NP_001018229.2">
    <property type="nucleotide sequence ID" value="NM_001018709.2"/>
</dbReference>
<dbReference type="SMR" id="Q8TFH0"/>
<dbReference type="BioGRID" id="280454">
    <property type="interactions" value="2"/>
</dbReference>
<dbReference type="FunCoup" id="Q8TFH0">
    <property type="interactions" value="418"/>
</dbReference>
<dbReference type="STRING" id="284812.Q8TFH0"/>
<dbReference type="iPTMnet" id="Q8TFH0"/>
<dbReference type="PaxDb" id="4896-SPAPB17E12.14c.1"/>
<dbReference type="EnsemblFungi" id="SPAPB17E12.14c.1">
    <property type="protein sequence ID" value="SPAPB17E12.14c.1:pep"/>
    <property type="gene ID" value="SPAPB17E12.14c"/>
</dbReference>
<dbReference type="KEGG" id="spo:3361378"/>
<dbReference type="PomBase" id="SPAPB17E12.14c"/>
<dbReference type="VEuPathDB" id="FungiDB:SPAPB17E12.14c"/>
<dbReference type="eggNOG" id="KOG0234">
    <property type="taxonomic scope" value="Eukaryota"/>
</dbReference>
<dbReference type="HOGENOM" id="CLU_006383_3_1_1"/>
<dbReference type="InParanoid" id="Q8TFH0"/>
<dbReference type="OMA" id="HAYRYNE"/>
<dbReference type="PRO" id="PR:Q8TFH0"/>
<dbReference type="Proteomes" id="UP000002485">
    <property type="component" value="Chromosome I"/>
</dbReference>
<dbReference type="GO" id="GO:0005829">
    <property type="term" value="C:cytosol"/>
    <property type="evidence" value="ECO:0000318"/>
    <property type="project" value="GO_Central"/>
</dbReference>
<dbReference type="GO" id="GO:0003873">
    <property type="term" value="F:6-phosphofructo-2-kinase activity"/>
    <property type="evidence" value="ECO:0000318"/>
    <property type="project" value="GO_Central"/>
</dbReference>
<dbReference type="GO" id="GO:0005524">
    <property type="term" value="F:ATP binding"/>
    <property type="evidence" value="ECO:0007669"/>
    <property type="project" value="UniProtKB-KW"/>
</dbReference>
<dbReference type="GO" id="GO:0006003">
    <property type="term" value="P:fructose 2,6-bisphosphate metabolic process"/>
    <property type="evidence" value="ECO:0000318"/>
    <property type="project" value="GO_Central"/>
</dbReference>
<dbReference type="GO" id="GO:0006000">
    <property type="term" value="P:fructose metabolic process"/>
    <property type="evidence" value="ECO:0007669"/>
    <property type="project" value="InterPro"/>
</dbReference>
<dbReference type="CDD" id="cd07067">
    <property type="entry name" value="HP_PGM_like"/>
    <property type="match status" value="1"/>
</dbReference>
<dbReference type="FunFam" id="3.40.50.300:FF:000644">
    <property type="entry name" value="GpmB, Fructose-2,6-bisphosphatase"/>
    <property type="match status" value="1"/>
</dbReference>
<dbReference type="Gene3D" id="3.40.50.300">
    <property type="entry name" value="P-loop containing nucleotide triphosphate hydrolases"/>
    <property type="match status" value="1"/>
</dbReference>
<dbReference type="Gene3D" id="3.40.50.1240">
    <property type="entry name" value="Phosphoglycerate mutase-like"/>
    <property type="match status" value="1"/>
</dbReference>
<dbReference type="InterPro" id="IPR003094">
    <property type="entry name" value="6Pfruct_kin"/>
</dbReference>
<dbReference type="InterPro" id="IPR013079">
    <property type="entry name" value="6Phosfructo_kin"/>
</dbReference>
<dbReference type="InterPro" id="IPR013078">
    <property type="entry name" value="His_Pase_superF_clade-1"/>
</dbReference>
<dbReference type="InterPro" id="IPR029033">
    <property type="entry name" value="His_PPase_superfam"/>
</dbReference>
<dbReference type="InterPro" id="IPR027417">
    <property type="entry name" value="P-loop_NTPase"/>
</dbReference>
<dbReference type="InterPro" id="IPR001345">
    <property type="entry name" value="PG/BPGM_mutase_AS"/>
</dbReference>
<dbReference type="PANTHER" id="PTHR10606:SF32">
    <property type="entry name" value="6-PHOSPHOFRUCTO-2-KINASE 1"/>
    <property type="match status" value="1"/>
</dbReference>
<dbReference type="PANTHER" id="PTHR10606">
    <property type="entry name" value="6-PHOSPHOFRUCTO-2-KINASE/FRUCTOSE-2,6-BISPHOSPHATASE"/>
    <property type="match status" value="1"/>
</dbReference>
<dbReference type="Pfam" id="PF01591">
    <property type="entry name" value="6PF2K"/>
    <property type="match status" value="1"/>
</dbReference>
<dbReference type="Pfam" id="PF00300">
    <property type="entry name" value="His_Phos_1"/>
    <property type="match status" value="1"/>
</dbReference>
<dbReference type="PIRSF" id="PIRSF000709">
    <property type="entry name" value="6PFK_2-Ptase"/>
    <property type="match status" value="1"/>
</dbReference>
<dbReference type="PRINTS" id="PR00991">
    <property type="entry name" value="6PFRUCTKNASE"/>
</dbReference>
<dbReference type="SMART" id="SM00855">
    <property type="entry name" value="PGAM"/>
    <property type="match status" value="1"/>
</dbReference>
<dbReference type="SUPFAM" id="SSF52540">
    <property type="entry name" value="P-loop containing nucleoside triphosphate hydrolases"/>
    <property type="match status" value="1"/>
</dbReference>
<dbReference type="SUPFAM" id="SSF53254">
    <property type="entry name" value="Phosphoglycerate mutase-like"/>
    <property type="match status" value="1"/>
</dbReference>
<dbReference type="PROSITE" id="PS00175">
    <property type="entry name" value="PG_MUTASE"/>
    <property type="match status" value="1"/>
</dbReference>
<proteinExistence type="evidence at protein level"/>
<name>YIKE_SCHPO</name>
<organism>
    <name type="scientific">Schizosaccharomyces pombe (strain 972 / ATCC 24843)</name>
    <name type="common">Fission yeast</name>
    <dbReference type="NCBI Taxonomy" id="284812"/>
    <lineage>
        <taxon>Eukaryota</taxon>
        <taxon>Fungi</taxon>
        <taxon>Dikarya</taxon>
        <taxon>Ascomycota</taxon>
        <taxon>Taphrinomycotina</taxon>
        <taxon>Schizosaccharomycetes</taxon>
        <taxon>Schizosaccharomycetales</taxon>
        <taxon>Schizosaccharomycetaceae</taxon>
        <taxon>Schizosaccharomyces</taxon>
    </lineage>
</organism>
<gene>
    <name type="ORF">SPAPB17E12.14c</name>
</gene>
<evidence type="ECO:0000250" key="1"/>
<evidence type="ECO:0000255" key="2"/>
<evidence type="ECO:0000256" key="3">
    <source>
        <dbReference type="SAM" id="MobiDB-lite"/>
    </source>
</evidence>
<comment type="function">
    <text evidence="1">Synthesis of fructose 2,6-bisphosphate.</text>
</comment>
<comment type="catalytic activity">
    <reaction>
        <text>beta-D-fructose 6-phosphate + ATP = beta-D-fructose 2,6-bisphosphate + ADP + H(+)</text>
        <dbReference type="Rhea" id="RHEA:15653"/>
        <dbReference type="ChEBI" id="CHEBI:15378"/>
        <dbReference type="ChEBI" id="CHEBI:30616"/>
        <dbReference type="ChEBI" id="CHEBI:57634"/>
        <dbReference type="ChEBI" id="CHEBI:58579"/>
        <dbReference type="ChEBI" id="CHEBI:456216"/>
        <dbReference type="EC" id="2.7.1.105"/>
    </reaction>
</comment>
<protein>
    <recommendedName>
        <fullName>Probable 6-phosphofructo-2-kinase PB17E12.14c</fullName>
        <ecNumber>2.7.1.105</ecNumber>
    </recommendedName>
</protein>
<accession>Q8TFH0</accession>
<keyword id="KW-0067">ATP-binding</keyword>
<keyword id="KW-0418">Kinase</keyword>
<keyword id="KW-0547">Nucleotide-binding</keyword>
<keyword id="KW-1185">Reference proteome</keyword>
<keyword id="KW-0808">Transferase</keyword>
<reference key="1">
    <citation type="journal article" date="2002" name="Nature">
        <title>The genome sequence of Schizosaccharomyces pombe.</title>
        <authorList>
            <person name="Wood V."/>
            <person name="Gwilliam R."/>
            <person name="Rajandream M.A."/>
            <person name="Lyne M.H."/>
            <person name="Lyne R."/>
            <person name="Stewart A."/>
            <person name="Sgouros J.G."/>
            <person name="Peat N."/>
            <person name="Hayles J."/>
            <person name="Baker S.G."/>
            <person name="Basham D."/>
            <person name="Bowman S."/>
            <person name="Brooks K."/>
            <person name="Brown D."/>
            <person name="Brown S."/>
            <person name="Chillingworth T."/>
            <person name="Churcher C.M."/>
            <person name="Collins M."/>
            <person name="Connor R."/>
            <person name="Cronin A."/>
            <person name="Davis P."/>
            <person name="Feltwell T."/>
            <person name="Fraser A."/>
            <person name="Gentles S."/>
            <person name="Goble A."/>
            <person name="Hamlin N."/>
            <person name="Harris D.E."/>
            <person name="Hidalgo J."/>
            <person name="Hodgson G."/>
            <person name="Holroyd S."/>
            <person name="Hornsby T."/>
            <person name="Howarth S."/>
            <person name="Huckle E.J."/>
            <person name="Hunt S."/>
            <person name="Jagels K."/>
            <person name="James K.D."/>
            <person name="Jones L."/>
            <person name="Jones M."/>
            <person name="Leather S."/>
            <person name="McDonald S."/>
            <person name="McLean J."/>
            <person name="Mooney P."/>
            <person name="Moule S."/>
            <person name="Mungall K.L."/>
            <person name="Murphy L.D."/>
            <person name="Niblett D."/>
            <person name="Odell C."/>
            <person name="Oliver K."/>
            <person name="O'Neil S."/>
            <person name="Pearson D."/>
            <person name="Quail M.A."/>
            <person name="Rabbinowitsch E."/>
            <person name="Rutherford K.M."/>
            <person name="Rutter S."/>
            <person name="Saunders D."/>
            <person name="Seeger K."/>
            <person name="Sharp S."/>
            <person name="Skelton J."/>
            <person name="Simmonds M.N."/>
            <person name="Squares R."/>
            <person name="Squares S."/>
            <person name="Stevens K."/>
            <person name="Taylor K."/>
            <person name="Taylor R.G."/>
            <person name="Tivey A."/>
            <person name="Walsh S.V."/>
            <person name="Warren T."/>
            <person name="Whitehead S."/>
            <person name="Woodward J.R."/>
            <person name="Volckaert G."/>
            <person name="Aert R."/>
            <person name="Robben J."/>
            <person name="Grymonprez B."/>
            <person name="Weltjens I."/>
            <person name="Vanstreels E."/>
            <person name="Rieger M."/>
            <person name="Schaefer M."/>
            <person name="Mueller-Auer S."/>
            <person name="Gabel C."/>
            <person name="Fuchs M."/>
            <person name="Duesterhoeft A."/>
            <person name="Fritzc C."/>
            <person name="Holzer E."/>
            <person name="Moestl D."/>
            <person name="Hilbert H."/>
            <person name="Borzym K."/>
            <person name="Langer I."/>
            <person name="Beck A."/>
            <person name="Lehrach H."/>
            <person name="Reinhardt R."/>
            <person name="Pohl T.M."/>
            <person name="Eger P."/>
            <person name="Zimmermann W."/>
            <person name="Wedler H."/>
            <person name="Wambutt R."/>
            <person name="Purnelle B."/>
            <person name="Goffeau A."/>
            <person name="Cadieu E."/>
            <person name="Dreano S."/>
            <person name="Gloux S."/>
            <person name="Lelaure V."/>
            <person name="Mottier S."/>
            <person name="Galibert F."/>
            <person name="Aves S.J."/>
            <person name="Xiang Z."/>
            <person name="Hunt C."/>
            <person name="Moore K."/>
            <person name="Hurst S.M."/>
            <person name="Lucas M."/>
            <person name="Rochet M."/>
            <person name="Gaillardin C."/>
            <person name="Tallada V.A."/>
            <person name="Garzon A."/>
            <person name="Thode G."/>
            <person name="Daga R.R."/>
            <person name="Cruzado L."/>
            <person name="Jimenez J."/>
            <person name="Sanchez M."/>
            <person name="del Rey F."/>
            <person name="Benito J."/>
            <person name="Dominguez A."/>
            <person name="Revuelta J.L."/>
            <person name="Moreno S."/>
            <person name="Armstrong J."/>
            <person name="Forsburg S.L."/>
            <person name="Cerutti L."/>
            <person name="Lowe T."/>
            <person name="McCombie W.R."/>
            <person name="Paulsen I."/>
            <person name="Potashkin J."/>
            <person name="Shpakovski G.V."/>
            <person name="Ussery D."/>
            <person name="Barrell B.G."/>
            <person name="Nurse P."/>
        </authorList>
    </citation>
    <scope>NUCLEOTIDE SEQUENCE [LARGE SCALE GENOMIC DNA]</scope>
    <source>
        <strain>972 / ATCC 24843</strain>
    </source>
</reference>
<reference key="2">
    <citation type="journal article" date="2011" name="Science">
        <title>Comparative functional genomics of the fission yeasts.</title>
        <authorList>
            <person name="Rhind N."/>
            <person name="Chen Z."/>
            <person name="Yassour M."/>
            <person name="Thompson D.A."/>
            <person name="Haas B.J."/>
            <person name="Habib N."/>
            <person name="Wapinski I."/>
            <person name="Roy S."/>
            <person name="Lin M.F."/>
            <person name="Heiman D.I."/>
            <person name="Young S.K."/>
            <person name="Furuya K."/>
            <person name="Guo Y."/>
            <person name="Pidoux A."/>
            <person name="Chen H.M."/>
            <person name="Robbertse B."/>
            <person name="Goldberg J.M."/>
            <person name="Aoki K."/>
            <person name="Bayne E.H."/>
            <person name="Berlin A.M."/>
            <person name="Desjardins C.A."/>
            <person name="Dobbs E."/>
            <person name="Dukaj L."/>
            <person name="Fan L."/>
            <person name="FitzGerald M.G."/>
            <person name="French C."/>
            <person name="Gujja S."/>
            <person name="Hansen K."/>
            <person name="Keifenheim D."/>
            <person name="Levin J.Z."/>
            <person name="Mosher R.A."/>
            <person name="Mueller C.A."/>
            <person name="Pfiffner J."/>
            <person name="Priest M."/>
            <person name="Russ C."/>
            <person name="Smialowska A."/>
            <person name="Swoboda P."/>
            <person name="Sykes S.M."/>
            <person name="Vaughn M."/>
            <person name="Vengrova S."/>
            <person name="Yoder R."/>
            <person name="Zeng Q."/>
            <person name="Allshire R."/>
            <person name="Baulcombe D."/>
            <person name="Birren B.W."/>
            <person name="Brown W."/>
            <person name="Ekwall K."/>
            <person name="Kellis M."/>
            <person name="Leatherwood J."/>
            <person name="Levin H."/>
            <person name="Margalit H."/>
            <person name="Martienssen R."/>
            <person name="Nieduszynski C.A."/>
            <person name="Spatafora J.W."/>
            <person name="Friedman N."/>
            <person name="Dalgaard J.Z."/>
            <person name="Baumann P."/>
            <person name="Niki H."/>
            <person name="Regev A."/>
            <person name="Nusbaum C."/>
        </authorList>
    </citation>
    <scope>REVISION OF GENE MODEL</scope>
</reference>
<reference key="3">
    <citation type="journal article" date="2011" name="Genetics">
        <title>Augmented annotation of the Schizosaccharomyces pombe genome reveals additional genes required for growth and viability.</title>
        <authorList>
            <person name="Bitton D.A."/>
            <person name="Wood V."/>
            <person name="Scutt P.J."/>
            <person name="Grallert A."/>
            <person name="Yates T."/>
            <person name="Smith D.L."/>
            <person name="Hagan I.M."/>
            <person name="Miller C.J."/>
        </authorList>
    </citation>
    <scope>REVISION OF GENE MODEL</scope>
    <scope>IDENTIFICATION BY MASS SPECTROMETRY</scope>
</reference>